<protein>
    <recommendedName>
        <fullName evidence="1">Peptide deformylase</fullName>
        <shortName evidence="1">PDF</shortName>
        <ecNumber evidence="1">3.5.1.88</ecNumber>
    </recommendedName>
    <alternativeName>
        <fullName evidence="1">Polypeptide deformylase</fullName>
    </alternativeName>
</protein>
<sequence length="183" mass="20734">MLTMDDIVREGHPALREVATEVTFPLSDEEKKLGRDMLEFLINSQDEEMAEKYGLRGGVGIAAPQLAVTKRFLAIHVHDEKDRLYSYVLYNPKIRSHSVQQACLSGGEGCLSVDREVPGYVVRSERVTIDAFDENGTPLKLRFKDYPAIVIQHEIDHLNGIMFYDHINKENPSYLPPDVDVFG</sequence>
<organism>
    <name type="scientific">Listeria monocytogenes serotype 4a (strain HCC23)</name>
    <dbReference type="NCBI Taxonomy" id="552536"/>
    <lineage>
        <taxon>Bacteria</taxon>
        <taxon>Bacillati</taxon>
        <taxon>Bacillota</taxon>
        <taxon>Bacilli</taxon>
        <taxon>Bacillales</taxon>
        <taxon>Listeriaceae</taxon>
        <taxon>Listeria</taxon>
    </lineage>
</organism>
<dbReference type="EC" id="3.5.1.88" evidence="1"/>
<dbReference type="EMBL" id="CP001175">
    <property type="protein sequence ID" value="ACK39920.1"/>
    <property type="molecule type" value="Genomic_DNA"/>
</dbReference>
<dbReference type="RefSeq" id="WP_003730100.1">
    <property type="nucleotide sequence ID" value="NC_011660.1"/>
</dbReference>
<dbReference type="SMR" id="B8DCF7"/>
<dbReference type="KEGG" id="lmh:LMHCC_1577"/>
<dbReference type="HOGENOM" id="CLU_061901_4_0_9"/>
<dbReference type="GO" id="GO:0046872">
    <property type="term" value="F:metal ion binding"/>
    <property type="evidence" value="ECO:0007669"/>
    <property type="project" value="UniProtKB-KW"/>
</dbReference>
<dbReference type="GO" id="GO:0042586">
    <property type="term" value="F:peptide deformylase activity"/>
    <property type="evidence" value="ECO:0007669"/>
    <property type="project" value="UniProtKB-UniRule"/>
</dbReference>
<dbReference type="GO" id="GO:0043686">
    <property type="term" value="P:co-translational protein modification"/>
    <property type="evidence" value="ECO:0007669"/>
    <property type="project" value="TreeGrafter"/>
</dbReference>
<dbReference type="GO" id="GO:0006412">
    <property type="term" value="P:translation"/>
    <property type="evidence" value="ECO:0007669"/>
    <property type="project" value="UniProtKB-UniRule"/>
</dbReference>
<dbReference type="CDD" id="cd00487">
    <property type="entry name" value="Pep_deformylase"/>
    <property type="match status" value="1"/>
</dbReference>
<dbReference type="FunFam" id="3.90.45.10:FF:000002">
    <property type="entry name" value="Peptide deformylase"/>
    <property type="match status" value="1"/>
</dbReference>
<dbReference type="Gene3D" id="3.90.45.10">
    <property type="entry name" value="Peptide deformylase"/>
    <property type="match status" value="1"/>
</dbReference>
<dbReference type="HAMAP" id="MF_00163">
    <property type="entry name" value="Pep_deformylase"/>
    <property type="match status" value="1"/>
</dbReference>
<dbReference type="InterPro" id="IPR023635">
    <property type="entry name" value="Peptide_deformylase"/>
</dbReference>
<dbReference type="InterPro" id="IPR036821">
    <property type="entry name" value="Peptide_deformylase_sf"/>
</dbReference>
<dbReference type="NCBIfam" id="TIGR00079">
    <property type="entry name" value="pept_deformyl"/>
    <property type="match status" value="1"/>
</dbReference>
<dbReference type="PANTHER" id="PTHR10458">
    <property type="entry name" value="PEPTIDE DEFORMYLASE"/>
    <property type="match status" value="1"/>
</dbReference>
<dbReference type="PANTHER" id="PTHR10458:SF8">
    <property type="entry name" value="PEPTIDE DEFORMYLASE 2"/>
    <property type="match status" value="1"/>
</dbReference>
<dbReference type="Pfam" id="PF01327">
    <property type="entry name" value="Pep_deformylase"/>
    <property type="match status" value="1"/>
</dbReference>
<dbReference type="PIRSF" id="PIRSF004749">
    <property type="entry name" value="Pep_def"/>
    <property type="match status" value="1"/>
</dbReference>
<dbReference type="PRINTS" id="PR01576">
    <property type="entry name" value="PDEFORMYLASE"/>
</dbReference>
<dbReference type="SUPFAM" id="SSF56420">
    <property type="entry name" value="Peptide deformylase"/>
    <property type="match status" value="1"/>
</dbReference>
<name>DEF_LISMH</name>
<gene>
    <name evidence="1" type="primary">def</name>
    <name type="ordered locus">LMHCC_1577</name>
</gene>
<feature type="chain" id="PRO_1000200737" description="Peptide deformylase">
    <location>
        <begin position="1"/>
        <end position="183"/>
    </location>
</feature>
<feature type="active site" evidence="1">
    <location>
        <position position="154"/>
    </location>
</feature>
<feature type="binding site" evidence="1">
    <location>
        <position position="110"/>
    </location>
    <ligand>
        <name>Fe cation</name>
        <dbReference type="ChEBI" id="CHEBI:24875"/>
    </ligand>
</feature>
<feature type="binding site" evidence="1">
    <location>
        <position position="153"/>
    </location>
    <ligand>
        <name>Fe cation</name>
        <dbReference type="ChEBI" id="CHEBI:24875"/>
    </ligand>
</feature>
<feature type="binding site" evidence="1">
    <location>
        <position position="157"/>
    </location>
    <ligand>
        <name>Fe cation</name>
        <dbReference type="ChEBI" id="CHEBI:24875"/>
    </ligand>
</feature>
<proteinExistence type="inferred from homology"/>
<accession>B8DCF7</accession>
<comment type="function">
    <text evidence="1">Removes the formyl group from the N-terminal Met of newly synthesized proteins. Requires at least a dipeptide for an efficient rate of reaction. N-terminal L-methionine is a prerequisite for activity but the enzyme has broad specificity at other positions.</text>
</comment>
<comment type="catalytic activity">
    <reaction evidence="1">
        <text>N-terminal N-formyl-L-methionyl-[peptide] + H2O = N-terminal L-methionyl-[peptide] + formate</text>
        <dbReference type="Rhea" id="RHEA:24420"/>
        <dbReference type="Rhea" id="RHEA-COMP:10639"/>
        <dbReference type="Rhea" id="RHEA-COMP:10640"/>
        <dbReference type="ChEBI" id="CHEBI:15377"/>
        <dbReference type="ChEBI" id="CHEBI:15740"/>
        <dbReference type="ChEBI" id="CHEBI:49298"/>
        <dbReference type="ChEBI" id="CHEBI:64731"/>
        <dbReference type="EC" id="3.5.1.88"/>
    </reaction>
</comment>
<comment type="cofactor">
    <cofactor evidence="1">
        <name>Fe(2+)</name>
        <dbReference type="ChEBI" id="CHEBI:29033"/>
    </cofactor>
    <text evidence="1">Binds 1 Fe(2+) ion.</text>
</comment>
<comment type="similarity">
    <text evidence="1">Belongs to the polypeptide deformylase family.</text>
</comment>
<evidence type="ECO:0000255" key="1">
    <source>
        <dbReference type="HAMAP-Rule" id="MF_00163"/>
    </source>
</evidence>
<reference key="1">
    <citation type="journal article" date="2011" name="J. Bacteriol.">
        <title>Genome sequence of lineage III Listeria monocytogenes strain HCC23.</title>
        <authorList>
            <person name="Steele C.L."/>
            <person name="Donaldson J.R."/>
            <person name="Paul D."/>
            <person name="Banes M.M."/>
            <person name="Arick T."/>
            <person name="Bridges S.M."/>
            <person name="Lawrence M.L."/>
        </authorList>
    </citation>
    <scope>NUCLEOTIDE SEQUENCE [LARGE SCALE GENOMIC DNA]</scope>
    <source>
        <strain>HCC23</strain>
    </source>
</reference>
<keyword id="KW-0378">Hydrolase</keyword>
<keyword id="KW-0408">Iron</keyword>
<keyword id="KW-0479">Metal-binding</keyword>
<keyword id="KW-0648">Protein biosynthesis</keyword>